<name>RS20_HELHP</name>
<comment type="function">
    <text evidence="1">Binds directly to 16S ribosomal RNA.</text>
</comment>
<comment type="similarity">
    <text evidence="1">Belongs to the bacterial ribosomal protein bS20 family.</text>
</comment>
<comment type="sequence caution" evidence="3">
    <conflict type="erroneous initiation">
        <sequence resource="EMBL-CDS" id="AAP78375"/>
    </conflict>
</comment>
<keyword id="KW-1185">Reference proteome</keyword>
<keyword id="KW-0687">Ribonucleoprotein</keyword>
<keyword id="KW-0689">Ribosomal protein</keyword>
<keyword id="KW-0694">RNA-binding</keyword>
<keyword id="KW-0699">rRNA-binding</keyword>
<dbReference type="EMBL" id="AE017125">
    <property type="protein sequence ID" value="AAP78375.1"/>
    <property type="status" value="ALT_INIT"/>
    <property type="molecule type" value="Genomic_DNA"/>
</dbReference>
<dbReference type="RefSeq" id="WP_011116617.1">
    <property type="nucleotide sequence ID" value="NC_004917.1"/>
</dbReference>
<dbReference type="SMR" id="Q7VF99"/>
<dbReference type="STRING" id="235279.HH_1778"/>
<dbReference type="KEGG" id="hhe:HH_1778"/>
<dbReference type="eggNOG" id="COG0268">
    <property type="taxonomic scope" value="Bacteria"/>
</dbReference>
<dbReference type="HOGENOM" id="CLU_160655_3_0_7"/>
<dbReference type="OrthoDB" id="9807974at2"/>
<dbReference type="Proteomes" id="UP000002495">
    <property type="component" value="Chromosome"/>
</dbReference>
<dbReference type="GO" id="GO:0005829">
    <property type="term" value="C:cytosol"/>
    <property type="evidence" value="ECO:0007669"/>
    <property type="project" value="TreeGrafter"/>
</dbReference>
<dbReference type="GO" id="GO:0015935">
    <property type="term" value="C:small ribosomal subunit"/>
    <property type="evidence" value="ECO:0007669"/>
    <property type="project" value="TreeGrafter"/>
</dbReference>
<dbReference type="GO" id="GO:0070181">
    <property type="term" value="F:small ribosomal subunit rRNA binding"/>
    <property type="evidence" value="ECO:0007669"/>
    <property type="project" value="TreeGrafter"/>
</dbReference>
<dbReference type="GO" id="GO:0003735">
    <property type="term" value="F:structural constituent of ribosome"/>
    <property type="evidence" value="ECO:0007669"/>
    <property type="project" value="InterPro"/>
</dbReference>
<dbReference type="GO" id="GO:0006412">
    <property type="term" value="P:translation"/>
    <property type="evidence" value="ECO:0007669"/>
    <property type="project" value="UniProtKB-UniRule"/>
</dbReference>
<dbReference type="FunFam" id="1.20.58.110:FF:000001">
    <property type="entry name" value="30S ribosomal protein S20"/>
    <property type="match status" value="1"/>
</dbReference>
<dbReference type="Gene3D" id="1.20.58.110">
    <property type="entry name" value="Ribosomal protein S20"/>
    <property type="match status" value="1"/>
</dbReference>
<dbReference type="HAMAP" id="MF_00500">
    <property type="entry name" value="Ribosomal_bS20"/>
    <property type="match status" value="1"/>
</dbReference>
<dbReference type="InterPro" id="IPR002583">
    <property type="entry name" value="Ribosomal_bS20"/>
</dbReference>
<dbReference type="InterPro" id="IPR036510">
    <property type="entry name" value="Ribosomal_bS20_sf"/>
</dbReference>
<dbReference type="NCBIfam" id="TIGR00029">
    <property type="entry name" value="S20"/>
    <property type="match status" value="1"/>
</dbReference>
<dbReference type="PANTHER" id="PTHR33398">
    <property type="entry name" value="30S RIBOSOMAL PROTEIN S20"/>
    <property type="match status" value="1"/>
</dbReference>
<dbReference type="PANTHER" id="PTHR33398:SF1">
    <property type="entry name" value="SMALL RIBOSOMAL SUBUNIT PROTEIN BS20C"/>
    <property type="match status" value="1"/>
</dbReference>
<dbReference type="Pfam" id="PF01649">
    <property type="entry name" value="Ribosomal_S20p"/>
    <property type="match status" value="1"/>
</dbReference>
<dbReference type="SUPFAM" id="SSF46992">
    <property type="entry name" value="Ribosomal protein S20"/>
    <property type="match status" value="1"/>
</dbReference>
<organism>
    <name type="scientific">Helicobacter hepaticus (strain ATCC 51449 / 3B1)</name>
    <dbReference type="NCBI Taxonomy" id="235279"/>
    <lineage>
        <taxon>Bacteria</taxon>
        <taxon>Pseudomonadati</taxon>
        <taxon>Campylobacterota</taxon>
        <taxon>Epsilonproteobacteria</taxon>
        <taxon>Campylobacterales</taxon>
        <taxon>Helicobacteraceae</taxon>
        <taxon>Helicobacter</taxon>
    </lineage>
</organism>
<reference key="1">
    <citation type="journal article" date="2003" name="Proc. Natl. Acad. Sci. U.S.A.">
        <title>The complete genome sequence of the carcinogenic bacterium Helicobacter hepaticus.</title>
        <authorList>
            <person name="Suerbaum S."/>
            <person name="Josenhans C."/>
            <person name="Sterzenbach T."/>
            <person name="Drescher B."/>
            <person name="Brandt P."/>
            <person name="Bell M."/>
            <person name="Droege M."/>
            <person name="Fartmann B."/>
            <person name="Fischer H.-P."/>
            <person name="Ge Z."/>
            <person name="Hoerster A."/>
            <person name="Holland R."/>
            <person name="Klein K."/>
            <person name="Koenig J."/>
            <person name="Macko L."/>
            <person name="Mendz G.L."/>
            <person name="Nyakatura G."/>
            <person name="Schauer D.B."/>
            <person name="Shen Z."/>
            <person name="Weber J."/>
            <person name="Frosch M."/>
            <person name="Fox J.G."/>
        </authorList>
    </citation>
    <scope>NUCLEOTIDE SEQUENCE [LARGE SCALE GENOMIC DNA]</scope>
    <source>
        <strain>ATCC 51449 / 3B1</strain>
    </source>
</reference>
<evidence type="ECO:0000255" key="1">
    <source>
        <dbReference type="HAMAP-Rule" id="MF_00500"/>
    </source>
</evidence>
<evidence type="ECO:0000256" key="2">
    <source>
        <dbReference type="SAM" id="MobiDB-lite"/>
    </source>
</evidence>
<evidence type="ECO:0000305" key="3"/>
<sequence>MANHKSAQKRIRQTKTRTERNRYYKTRIKNIVRDLREAVLNKDVAKAQEALKIANKELHKYVSKGILKKNTAARKVSRLNASVKKIAQSA</sequence>
<accession>Q7VF99</accession>
<proteinExistence type="inferred from homology"/>
<feature type="chain" id="PRO_0000167970" description="Small ribosomal subunit protein bS20">
    <location>
        <begin position="1"/>
        <end position="90"/>
    </location>
</feature>
<feature type="region of interest" description="Disordered" evidence="2">
    <location>
        <begin position="1"/>
        <end position="22"/>
    </location>
</feature>
<feature type="compositionally biased region" description="Basic residues" evidence="2">
    <location>
        <begin position="1"/>
        <end position="15"/>
    </location>
</feature>
<protein>
    <recommendedName>
        <fullName evidence="1">Small ribosomal subunit protein bS20</fullName>
    </recommendedName>
    <alternativeName>
        <fullName evidence="3">30S ribosomal protein S20</fullName>
    </alternativeName>
</protein>
<gene>
    <name evidence="1" type="primary">rpsT</name>
    <name type="ordered locus">HH_1778</name>
</gene>